<proteinExistence type="inferred from homology"/>
<name>IF3_STAS1</name>
<evidence type="ECO:0000255" key="1">
    <source>
        <dbReference type="HAMAP-Rule" id="MF_00080"/>
    </source>
</evidence>
<accession>Q49YB2</accession>
<dbReference type="EMBL" id="AP008934">
    <property type="protein sequence ID" value="BAE18229.1"/>
    <property type="molecule type" value="Genomic_DNA"/>
</dbReference>
<dbReference type="RefSeq" id="WP_002483063.1">
    <property type="nucleotide sequence ID" value="NZ_MTGA01000038.1"/>
</dbReference>
<dbReference type="SMR" id="Q49YB2"/>
<dbReference type="GeneID" id="66867317"/>
<dbReference type="KEGG" id="ssp:SSP1084"/>
<dbReference type="eggNOG" id="COG0290">
    <property type="taxonomic scope" value="Bacteria"/>
</dbReference>
<dbReference type="HOGENOM" id="CLU_054919_3_2_9"/>
<dbReference type="OrthoDB" id="9806014at2"/>
<dbReference type="Proteomes" id="UP000006371">
    <property type="component" value="Chromosome"/>
</dbReference>
<dbReference type="GO" id="GO:0005829">
    <property type="term" value="C:cytosol"/>
    <property type="evidence" value="ECO:0007669"/>
    <property type="project" value="TreeGrafter"/>
</dbReference>
<dbReference type="GO" id="GO:0016020">
    <property type="term" value="C:membrane"/>
    <property type="evidence" value="ECO:0007669"/>
    <property type="project" value="TreeGrafter"/>
</dbReference>
<dbReference type="GO" id="GO:0043022">
    <property type="term" value="F:ribosome binding"/>
    <property type="evidence" value="ECO:0007669"/>
    <property type="project" value="TreeGrafter"/>
</dbReference>
<dbReference type="GO" id="GO:0003743">
    <property type="term" value="F:translation initiation factor activity"/>
    <property type="evidence" value="ECO:0007669"/>
    <property type="project" value="UniProtKB-UniRule"/>
</dbReference>
<dbReference type="GO" id="GO:0032790">
    <property type="term" value="P:ribosome disassembly"/>
    <property type="evidence" value="ECO:0007669"/>
    <property type="project" value="TreeGrafter"/>
</dbReference>
<dbReference type="FunFam" id="3.10.20.80:FF:000001">
    <property type="entry name" value="Translation initiation factor IF-3"/>
    <property type="match status" value="1"/>
</dbReference>
<dbReference type="FunFam" id="3.30.110.10:FF:000001">
    <property type="entry name" value="Translation initiation factor IF-3"/>
    <property type="match status" value="1"/>
</dbReference>
<dbReference type="Gene3D" id="3.30.110.10">
    <property type="entry name" value="Translation initiation factor 3 (IF-3), C-terminal domain"/>
    <property type="match status" value="1"/>
</dbReference>
<dbReference type="Gene3D" id="3.10.20.80">
    <property type="entry name" value="Translation initiation factor 3 (IF-3), N-terminal domain"/>
    <property type="match status" value="1"/>
</dbReference>
<dbReference type="HAMAP" id="MF_00080">
    <property type="entry name" value="IF_3"/>
    <property type="match status" value="1"/>
</dbReference>
<dbReference type="InterPro" id="IPR036788">
    <property type="entry name" value="T_IF-3_C_sf"/>
</dbReference>
<dbReference type="InterPro" id="IPR036787">
    <property type="entry name" value="T_IF-3_N_sf"/>
</dbReference>
<dbReference type="InterPro" id="IPR019813">
    <property type="entry name" value="Translation_initiation_fac3_CS"/>
</dbReference>
<dbReference type="InterPro" id="IPR001288">
    <property type="entry name" value="Translation_initiation_fac_3"/>
</dbReference>
<dbReference type="InterPro" id="IPR019815">
    <property type="entry name" value="Translation_initiation_fac_3_C"/>
</dbReference>
<dbReference type="InterPro" id="IPR019814">
    <property type="entry name" value="Translation_initiation_fac_3_N"/>
</dbReference>
<dbReference type="NCBIfam" id="TIGR00168">
    <property type="entry name" value="infC"/>
    <property type="match status" value="1"/>
</dbReference>
<dbReference type="PANTHER" id="PTHR10938">
    <property type="entry name" value="TRANSLATION INITIATION FACTOR IF-3"/>
    <property type="match status" value="1"/>
</dbReference>
<dbReference type="PANTHER" id="PTHR10938:SF0">
    <property type="entry name" value="TRANSLATION INITIATION FACTOR IF-3, MITOCHONDRIAL"/>
    <property type="match status" value="1"/>
</dbReference>
<dbReference type="Pfam" id="PF00707">
    <property type="entry name" value="IF3_C"/>
    <property type="match status" value="1"/>
</dbReference>
<dbReference type="Pfam" id="PF05198">
    <property type="entry name" value="IF3_N"/>
    <property type="match status" value="1"/>
</dbReference>
<dbReference type="SUPFAM" id="SSF55200">
    <property type="entry name" value="Translation initiation factor IF3, C-terminal domain"/>
    <property type="match status" value="1"/>
</dbReference>
<dbReference type="SUPFAM" id="SSF54364">
    <property type="entry name" value="Translation initiation factor IF3, N-terminal domain"/>
    <property type="match status" value="1"/>
</dbReference>
<dbReference type="PROSITE" id="PS00938">
    <property type="entry name" value="IF3"/>
    <property type="match status" value="1"/>
</dbReference>
<sequence>MSTIAKDQTQVNEKIRAKELRLIGQDGEQIGVKTKNEALEMAERVGLDVVIMAPNAKPPVARIMDYGKYKFEQQKKEKEMKKKQKTINLKEIRLSPTIEEHDFQTKLKNGRKFLEKGDKCKVSIRFRGRAITHKEIGQRVLEKFAEQCKDIATVEQRPKMDGRQMFIMLSPINEK</sequence>
<feature type="chain" id="PRO_1000004569" description="Translation initiation factor IF-3">
    <location>
        <begin position="1"/>
        <end position="175"/>
    </location>
</feature>
<organism>
    <name type="scientific">Staphylococcus saprophyticus subsp. saprophyticus (strain ATCC 15305 / DSM 20229 / NCIMB 8711 / NCTC 7292 / S-41)</name>
    <dbReference type="NCBI Taxonomy" id="342451"/>
    <lineage>
        <taxon>Bacteria</taxon>
        <taxon>Bacillati</taxon>
        <taxon>Bacillota</taxon>
        <taxon>Bacilli</taxon>
        <taxon>Bacillales</taxon>
        <taxon>Staphylococcaceae</taxon>
        <taxon>Staphylococcus</taxon>
    </lineage>
</organism>
<gene>
    <name evidence="1" type="primary">infC</name>
    <name type="ordered locus">SSP1084</name>
</gene>
<keyword id="KW-0963">Cytoplasm</keyword>
<keyword id="KW-0396">Initiation factor</keyword>
<keyword id="KW-0648">Protein biosynthesis</keyword>
<keyword id="KW-1185">Reference proteome</keyword>
<comment type="function">
    <text evidence="1">IF-3 binds to the 30S ribosomal subunit and shifts the equilibrium between 70S ribosomes and their 50S and 30S subunits in favor of the free subunits, thus enhancing the availability of 30S subunits on which protein synthesis initiation begins.</text>
</comment>
<comment type="subunit">
    <text evidence="1">Monomer.</text>
</comment>
<comment type="subcellular location">
    <subcellularLocation>
        <location evidence="1">Cytoplasm</location>
    </subcellularLocation>
</comment>
<comment type="similarity">
    <text evidence="1">Belongs to the IF-3 family.</text>
</comment>
<protein>
    <recommendedName>
        <fullName evidence="1">Translation initiation factor IF-3</fullName>
    </recommendedName>
</protein>
<reference key="1">
    <citation type="journal article" date="2005" name="Proc. Natl. Acad. Sci. U.S.A.">
        <title>Whole genome sequence of Staphylococcus saprophyticus reveals the pathogenesis of uncomplicated urinary tract infection.</title>
        <authorList>
            <person name="Kuroda M."/>
            <person name="Yamashita A."/>
            <person name="Hirakawa H."/>
            <person name="Kumano M."/>
            <person name="Morikawa K."/>
            <person name="Higashide M."/>
            <person name="Maruyama A."/>
            <person name="Inose Y."/>
            <person name="Matoba K."/>
            <person name="Toh H."/>
            <person name="Kuhara S."/>
            <person name="Hattori M."/>
            <person name="Ohta T."/>
        </authorList>
    </citation>
    <scope>NUCLEOTIDE SEQUENCE [LARGE SCALE GENOMIC DNA]</scope>
    <source>
        <strain>ATCC 15305 / DSM 20229 / NCIMB 8711 / NCTC 7292 / S-41</strain>
    </source>
</reference>